<organism>
    <name type="scientific">Mus musculus</name>
    <name type="common">Mouse</name>
    <dbReference type="NCBI Taxonomy" id="10090"/>
    <lineage>
        <taxon>Eukaryota</taxon>
        <taxon>Metazoa</taxon>
        <taxon>Chordata</taxon>
        <taxon>Craniata</taxon>
        <taxon>Vertebrata</taxon>
        <taxon>Euteleostomi</taxon>
        <taxon>Mammalia</taxon>
        <taxon>Eutheria</taxon>
        <taxon>Euarchontoglires</taxon>
        <taxon>Glires</taxon>
        <taxon>Rodentia</taxon>
        <taxon>Myomorpha</taxon>
        <taxon>Muroidea</taxon>
        <taxon>Muridae</taxon>
        <taxon>Murinae</taxon>
        <taxon>Mus</taxon>
        <taxon>Mus</taxon>
    </lineage>
</organism>
<evidence type="ECO:0000250" key="1"/>
<evidence type="ECO:0000255" key="2"/>
<evidence type="ECO:0000305" key="3"/>
<name>ARL11_MOUSE</name>
<feature type="initiator methionine" description="Removed" evidence="2">
    <location>
        <position position="1"/>
    </location>
</feature>
<feature type="chain" id="PRO_0000207480" description="ADP-ribosylation factor-like protein 11">
    <location>
        <begin position="2"/>
        <end position="176"/>
    </location>
</feature>
<feature type="binding site" evidence="1">
    <location>
        <begin position="19"/>
        <end position="26"/>
    </location>
    <ligand>
        <name>GTP</name>
        <dbReference type="ChEBI" id="CHEBI:37565"/>
    </ligand>
</feature>
<feature type="binding site" evidence="1">
    <location>
        <begin position="63"/>
        <end position="67"/>
    </location>
    <ligand>
        <name>GTP</name>
        <dbReference type="ChEBI" id="CHEBI:37565"/>
    </ligand>
</feature>
<feature type="binding site" evidence="1">
    <location>
        <begin position="122"/>
        <end position="125"/>
    </location>
    <ligand>
        <name>GTP</name>
        <dbReference type="ChEBI" id="CHEBI:37565"/>
    </ligand>
</feature>
<feature type="lipid moiety-binding region" description="N-myristoyl glycine" evidence="2">
    <location>
        <position position="2"/>
    </location>
</feature>
<feature type="sequence conflict" description="In Ref. 1; BAC34053." evidence="3" ref="1">
    <original>T</original>
    <variation>S</variation>
    <location>
        <position position="60"/>
    </location>
</feature>
<dbReference type="EMBL" id="AK008804">
    <property type="protein sequence ID" value="BAE43212.1"/>
    <property type="molecule type" value="mRNA"/>
</dbReference>
<dbReference type="EMBL" id="AK050053">
    <property type="protein sequence ID" value="BAC34053.1"/>
    <property type="molecule type" value="mRNA"/>
</dbReference>
<dbReference type="EMBL" id="BC064093">
    <property type="protein sequence ID" value="AAH64093.1"/>
    <property type="molecule type" value="mRNA"/>
</dbReference>
<dbReference type="CCDS" id="CCDS27182.1"/>
<dbReference type="RefSeq" id="NP_796311.2">
    <property type="nucleotide sequence ID" value="NM_177337.3"/>
</dbReference>
<dbReference type="RefSeq" id="XP_011243330.1">
    <property type="nucleotide sequence ID" value="XM_011245028.3"/>
</dbReference>
<dbReference type="SMR" id="Q6P3A9"/>
<dbReference type="FunCoup" id="Q6P3A9">
    <property type="interactions" value="250"/>
</dbReference>
<dbReference type="STRING" id="10090.ENSMUSP00000153531"/>
<dbReference type="iPTMnet" id="Q6P3A9"/>
<dbReference type="PhosphoSitePlus" id="Q6P3A9"/>
<dbReference type="PaxDb" id="10090-ENSMUSP00000055447"/>
<dbReference type="ProteomicsDB" id="265101"/>
<dbReference type="Antibodypedia" id="23950">
    <property type="antibodies" value="209 antibodies from 25 providers"/>
</dbReference>
<dbReference type="DNASU" id="219144"/>
<dbReference type="Ensembl" id="ENSMUST00000055159.8">
    <property type="protein sequence ID" value="ENSMUSP00000055447.8"/>
    <property type="gene ID" value="ENSMUSG00000043157.9"/>
</dbReference>
<dbReference type="Ensembl" id="ENSMUST00000224727.2">
    <property type="protein sequence ID" value="ENSMUSP00000153531.2"/>
    <property type="gene ID" value="ENSMUSG00000043157.9"/>
</dbReference>
<dbReference type="GeneID" id="219144"/>
<dbReference type="KEGG" id="mmu:219144"/>
<dbReference type="UCSC" id="uc007ufu.1">
    <property type="organism name" value="mouse"/>
</dbReference>
<dbReference type="AGR" id="MGI:2444054"/>
<dbReference type="CTD" id="115761"/>
<dbReference type="MGI" id="MGI:2444054">
    <property type="gene designation" value="Arl11"/>
</dbReference>
<dbReference type="VEuPathDB" id="HostDB:ENSMUSG00000043157"/>
<dbReference type="eggNOG" id="KOG0070">
    <property type="taxonomic scope" value="Eukaryota"/>
</dbReference>
<dbReference type="GeneTree" id="ENSGT00940000162731"/>
<dbReference type="HOGENOM" id="CLU_040729_9_2_1"/>
<dbReference type="InParanoid" id="Q6P3A9"/>
<dbReference type="OMA" id="GQAVETC"/>
<dbReference type="OrthoDB" id="8484332at2759"/>
<dbReference type="PhylomeDB" id="Q6P3A9"/>
<dbReference type="TreeFam" id="TF105471"/>
<dbReference type="BioGRID-ORCS" id="219144">
    <property type="hits" value="2 hits in 75 CRISPR screens"/>
</dbReference>
<dbReference type="ChiTaRS" id="Arl11">
    <property type="organism name" value="mouse"/>
</dbReference>
<dbReference type="PRO" id="PR:Q6P3A9"/>
<dbReference type="Proteomes" id="UP000000589">
    <property type="component" value="Chromosome 14"/>
</dbReference>
<dbReference type="RNAct" id="Q6P3A9">
    <property type="molecule type" value="protein"/>
</dbReference>
<dbReference type="Bgee" id="ENSMUSG00000043157">
    <property type="expression patterns" value="Expressed in granulocyte and 63 other cell types or tissues"/>
</dbReference>
<dbReference type="GO" id="GO:0005525">
    <property type="term" value="F:GTP binding"/>
    <property type="evidence" value="ECO:0007669"/>
    <property type="project" value="UniProtKB-KW"/>
</dbReference>
<dbReference type="GO" id="GO:0003924">
    <property type="term" value="F:GTPase activity"/>
    <property type="evidence" value="ECO:0007669"/>
    <property type="project" value="InterPro"/>
</dbReference>
<dbReference type="GO" id="GO:0002244">
    <property type="term" value="P:hematopoietic progenitor cell differentiation"/>
    <property type="evidence" value="ECO:0000315"/>
    <property type="project" value="MGI"/>
</dbReference>
<dbReference type="FunFam" id="3.40.50.300:FF:000898">
    <property type="entry name" value="ADP-ribosylation factor-like protein 11"/>
    <property type="match status" value="1"/>
</dbReference>
<dbReference type="Gene3D" id="3.40.50.300">
    <property type="entry name" value="P-loop containing nucleotide triphosphate hydrolases"/>
    <property type="match status" value="1"/>
</dbReference>
<dbReference type="InterPro" id="IPR027417">
    <property type="entry name" value="P-loop_NTPase"/>
</dbReference>
<dbReference type="InterPro" id="IPR005225">
    <property type="entry name" value="Small_GTP-bd"/>
</dbReference>
<dbReference type="InterPro" id="IPR024156">
    <property type="entry name" value="Small_GTPase_ARF"/>
</dbReference>
<dbReference type="InterPro" id="IPR006689">
    <property type="entry name" value="Small_GTPase_ARF/SAR"/>
</dbReference>
<dbReference type="NCBIfam" id="TIGR00231">
    <property type="entry name" value="small_GTP"/>
    <property type="match status" value="1"/>
</dbReference>
<dbReference type="PANTHER" id="PTHR11711">
    <property type="entry name" value="ADP RIBOSYLATION FACTOR-RELATED"/>
    <property type="match status" value="1"/>
</dbReference>
<dbReference type="Pfam" id="PF00025">
    <property type="entry name" value="Arf"/>
    <property type="match status" value="1"/>
</dbReference>
<dbReference type="PRINTS" id="PR00328">
    <property type="entry name" value="SAR1GTPBP"/>
</dbReference>
<dbReference type="SMART" id="SM00177">
    <property type="entry name" value="ARF"/>
    <property type="match status" value="1"/>
</dbReference>
<dbReference type="SMART" id="SM00178">
    <property type="entry name" value="SAR"/>
    <property type="match status" value="1"/>
</dbReference>
<dbReference type="SUPFAM" id="SSF52540">
    <property type="entry name" value="P-loop containing nucleoside triphosphate hydrolases"/>
    <property type="match status" value="1"/>
</dbReference>
<dbReference type="PROSITE" id="PS51417">
    <property type="entry name" value="ARF"/>
    <property type="match status" value="1"/>
</dbReference>
<proteinExistence type="evidence at transcript level"/>
<reference key="1">
    <citation type="journal article" date="2005" name="Science">
        <title>The transcriptional landscape of the mammalian genome.</title>
        <authorList>
            <person name="Carninci P."/>
            <person name="Kasukawa T."/>
            <person name="Katayama S."/>
            <person name="Gough J."/>
            <person name="Frith M.C."/>
            <person name="Maeda N."/>
            <person name="Oyama R."/>
            <person name="Ravasi T."/>
            <person name="Lenhard B."/>
            <person name="Wells C."/>
            <person name="Kodzius R."/>
            <person name="Shimokawa K."/>
            <person name="Bajic V.B."/>
            <person name="Brenner S.E."/>
            <person name="Batalov S."/>
            <person name="Forrest A.R."/>
            <person name="Zavolan M."/>
            <person name="Davis M.J."/>
            <person name="Wilming L.G."/>
            <person name="Aidinis V."/>
            <person name="Allen J.E."/>
            <person name="Ambesi-Impiombato A."/>
            <person name="Apweiler R."/>
            <person name="Aturaliya R.N."/>
            <person name="Bailey T.L."/>
            <person name="Bansal M."/>
            <person name="Baxter L."/>
            <person name="Beisel K.W."/>
            <person name="Bersano T."/>
            <person name="Bono H."/>
            <person name="Chalk A.M."/>
            <person name="Chiu K.P."/>
            <person name="Choudhary V."/>
            <person name="Christoffels A."/>
            <person name="Clutterbuck D.R."/>
            <person name="Crowe M.L."/>
            <person name="Dalla E."/>
            <person name="Dalrymple B.P."/>
            <person name="de Bono B."/>
            <person name="Della Gatta G."/>
            <person name="di Bernardo D."/>
            <person name="Down T."/>
            <person name="Engstrom P."/>
            <person name="Fagiolini M."/>
            <person name="Faulkner G."/>
            <person name="Fletcher C.F."/>
            <person name="Fukushima T."/>
            <person name="Furuno M."/>
            <person name="Futaki S."/>
            <person name="Gariboldi M."/>
            <person name="Georgii-Hemming P."/>
            <person name="Gingeras T.R."/>
            <person name="Gojobori T."/>
            <person name="Green R.E."/>
            <person name="Gustincich S."/>
            <person name="Harbers M."/>
            <person name="Hayashi Y."/>
            <person name="Hensch T.K."/>
            <person name="Hirokawa N."/>
            <person name="Hill D."/>
            <person name="Huminiecki L."/>
            <person name="Iacono M."/>
            <person name="Ikeo K."/>
            <person name="Iwama A."/>
            <person name="Ishikawa T."/>
            <person name="Jakt M."/>
            <person name="Kanapin A."/>
            <person name="Katoh M."/>
            <person name="Kawasawa Y."/>
            <person name="Kelso J."/>
            <person name="Kitamura H."/>
            <person name="Kitano H."/>
            <person name="Kollias G."/>
            <person name="Krishnan S.P."/>
            <person name="Kruger A."/>
            <person name="Kummerfeld S.K."/>
            <person name="Kurochkin I.V."/>
            <person name="Lareau L.F."/>
            <person name="Lazarevic D."/>
            <person name="Lipovich L."/>
            <person name="Liu J."/>
            <person name="Liuni S."/>
            <person name="McWilliam S."/>
            <person name="Madan Babu M."/>
            <person name="Madera M."/>
            <person name="Marchionni L."/>
            <person name="Matsuda H."/>
            <person name="Matsuzawa S."/>
            <person name="Miki H."/>
            <person name="Mignone F."/>
            <person name="Miyake S."/>
            <person name="Morris K."/>
            <person name="Mottagui-Tabar S."/>
            <person name="Mulder N."/>
            <person name="Nakano N."/>
            <person name="Nakauchi H."/>
            <person name="Ng P."/>
            <person name="Nilsson R."/>
            <person name="Nishiguchi S."/>
            <person name="Nishikawa S."/>
            <person name="Nori F."/>
            <person name="Ohara O."/>
            <person name="Okazaki Y."/>
            <person name="Orlando V."/>
            <person name="Pang K.C."/>
            <person name="Pavan W.J."/>
            <person name="Pavesi G."/>
            <person name="Pesole G."/>
            <person name="Petrovsky N."/>
            <person name="Piazza S."/>
            <person name="Reed J."/>
            <person name="Reid J.F."/>
            <person name="Ring B.Z."/>
            <person name="Ringwald M."/>
            <person name="Rost B."/>
            <person name="Ruan Y."/>
            <person name="Salzberg S.L."/>
            <person name="Sandelin A."/>
            <person name="Schneider C."/>
            <person name="Schoenbach C."/>
            <person name="Sekiguchi K."/>
            <person name="Semple C.A."/>
            <person name="Seno S."/>
            <person name="Sessa L."/>
            <person name="Sheng Y."/>
            <person name="Shibata Y."/>
            <person name="Shimada H."/>
            <person name="Shimada K."/>
            <person name="Silva D."/>
            <person name="Sinclair B."/>
            <person name="Sperling S."/>
            <person name="Stupka E."/>
            <person name="Sugiura K."/>
            <person name="Sultana R."/>
            <person name="Takenaka Y."/>
            <person name="Taki K."/>
            <person name="Tammoja K."/>
            <person name="Tan S.L."/>
            <person name="Tang S."/>
            <person name="Taylor M.S."/>
            <person name="Tegner J."/>
            <person name="Teichmann S.A."/>
            <person name="Ueda H.R."/>
            <person name="van Nimwegen E."/>
            <person name="Verardo R."/>
            <person name="Wei C.L."/>
            <person name="Yagi K."/>
            <person name="Yamanishi H."/>
            <person name="Zabarovsky E."/>
            <person name="Zhu S."/>
            <person name="Zimmer A."/>
            <person name="Hide W."/>
            <person name="Bult C."/>
            <person name="Grimmond S.M."/>
            <person name="Teasdale R.D."/>
            <person name="Liu E.T."/>
            <person name="Brusic V."/>
            <person name="Quackenbush J."/>
            <person name="Wahlestedt C."/>
            <person name="Mattick J.S."/>
            <person name="Hume D.A."/>
            <person name="Kai C."/>
            <person name="Sasaki D."/>
            <person name="Tomaru Y."/>
            <person name="Fukuda S."/>
            <person name="Kanamori-Katayama M."/>
            <person name="Suzuki M."/>
            <person name="Aoki J."/>
            <person name="Arakawa T."/>
            <person name="Iida J."/>
            <person name="Imamura K."/>
            <person name="Itoh M."/>
            <person name="Kato T."/>
            <person name="Kawaji H."/>
            <person name="Kawagashira N."/>
            <person name="Kawashima T."/>
            <person name="Kojima M."/>
            <person name="Kondo S."/>
            <person name="Konno H."/>
            <person name="Nakano K."/>
            <person name="Ninomiya N."/>
            <person name="Nishio T."/>
            <person name="Okada M."/>
            <person name="Plessy C."/>
            <person name="Shibata K."/>
            <person name="Shiraki T."/>
            <person name="Suzuki S."/>
            <person name="Tagami M."/>
            <person name="Waki K."/>
            <person name="Watahiki A."/>
            <person name="Okamura-Oho Y."/>
            <person name="Suzuki H."/>
            <person name="Kawai J."/>
            <person name="Hayashizaki Y."/>
        </authorList>
    </citation>
    <scope>NUCLEOTIDE SEQUENCE [LARGE SCALE MRNA]</scope>
    <source>
        <strain>C57BL/6J</strain>
        <tissue>Liver</tissue>
    </source>
</reference>
<reference key="2">
    <citation type="journal article" date="2004" name="Genome Res.">
        <title>The status, quality, and expansion of the NIH full-length cDNA project: the Mammalian Gene Collection (MGC).</title>
        <authorList>
            <consortium name="The MGC Project Team"/>
        </authorList>
    </citation>
    <scope>NUCLEOTIDE SEQUENCE [LARGE SCALE MRNA]</scope>
    <source>
        <strain>C57BL/6J</strain>
        <tissue>Mammary gland</tissue>
    </source>
</reference>
<keyword id="KW-0342">GTP-binding</keyword>
<keyword id="KW-0449">Lipoprotein</keyword>
<keyword id="KW-0519">Myristate</keyword>
<keyword id="KW-0547">Nucleotide-binding</keyword>
<keyword id="KW-1185">Reference proteome</keyword>
<sequence length="176" mass="19212">MGSVNSRGHKAEAQVVMMGLDSAGKTTILYKLKGNQLVDTLPTVGFNVEPLEAPGHVSLTLWDIGGQTQLRATWKDYLEGIDLLVYVLDSTDEARLPEAVAELKEVLEDPNMAGVPFLVLANKQEAPGALPLLEIRNRLGLEGFQKHCWELRACSALTGQGLQEALQSLLHLLKSR</sequence>
<protein>
    <recommendedName>
        <fullName>ADP-ribosylation factor-like protein 11</fullName>
    </recommendedName>
</protein>
<comment type="function">
    <text evidence="1">May play a role in apoptosis. May act as a tumor suppressor (By similarity).</text>
</comment>
<comment type="similarity">
    <text evidence="3">Belongs to the small GTPase superfamily. Arf family.</text>
</comment>
<accession>Q6P3A9</accession>
<accession>Q8C7K1</accession>
<gene>
    <name type="primary">Arl11</name>
</gene>